<accession>O60243</accession>
<accession>B4DEP2</accession>
<accession>B4DJ29</accession>
<accession>Q53SL2</accession>
<accession>Q9BVI1</accession>
<sequence length="411" mass="48226">MRRRRAGGRTMVERASKFVLVVAGSVCFMLILYQYAGPGLSLGAPGGRAPPDDLDLFPTPDPHYEKKYYFPVRELERSLRFDMKGDDVIVFLHIQKTGGTTFGRHLVQNVRLEVPCDCRPGQKKCTCYRPNRRETWLFSRFSTGWSCGLHADWTELTNCVPGVLDRRDSAALRTPRKFYYITLLRDPVSRYLSEWRHVQRGATWKTSLHMCDGRTPTPEELPPCYEGTDWSGCTLQEFMDCPYNLANNRQVRMLADLSLVGCYNLSFIPEGKRAQLLLESAKKNLRGMAFFGLTEFQRKTQYLFERTFNLKFIRPFMQYNSTRAGGVEVDEDTIRRIEELNDLDMQLYDYAKDLFQQRYQYKRQLERREQRLRSREERLLHRAKEALPREDADEPGRVPTEDYMSHIIEKW</sequence>
<gene>
    <name evidence="10" type="primary">HS6ST1</name>
    <name type="synonym">HS6ST</name>
</gene>
<protein>
    <recommendedName>
        <fullName evidence="8">Heparan-sulfate 6-O-sulfotransferase 1</fullName>
        <shortName>HS6ST-1</shortName>
        <ecNumber evidence="4">2.8.2.-</ecNumber>
    </recommendedName>
</protein>
<proteinExistence type="evidence at protein level"/>
<dbReference type="EC" id="2.8.2.-" evidence="4"/>
<dbReference type="EMBL" id="AB006179">
    <property type="protein sequence ID" value="BAA25760.1"/>
    <property type="status" value="ALT_SEQ"/>
    <property type="molecule type" value="mRNA"/>
</dbReference>
<dbReference type="EMBL" id="AK293724">
    <property type="protein sequence ID" value="BAG57153.1"/>
    <property type="status" value="ALT_INIT"/>
    <property type="molecule type" value="mRNA"/>
</dbReference>
<dbReference type="EMBL" id="AK295898">
    <property type="protein sequence ID" value="BAG58691.1"/>
    <property type="molecule type" value="mRNA"/>
</dbReference>
<dbReference type="EMBL" id="AC017079">
    <property type="protein sequence ID" value="AAY14736.1"/>
    <property type="status" value="ALT_INIT"/>
    <property type="molecule type" value="Genomic_DNA"/>
</dbReference>
<dbReference type="EMBL" id="BC001196">
    <property type="protein sequence ID" value="AAH01196.1"/>
    <property type="molecule type" value="mRNA"/>
</dbReference>
<dbReference type="EMBL" id="BC096239">
    <property type="protein sequence ID" value="AAH96239.4"/>
    <property type="molecule type" value="mRNA"/>
</dbReference>
<dbReference type="EMBL" id="BC096240">
    <property type="protein sequence ID" value="AAH96240.4"/>
    <property type="molecule type" value="mRNA"/>
</dbReference>
<dbReference type="EMBL" id="BC099638">
    <property type="protein sequence ID" value="AAH99638.4"/>
    <property type="molecule type" value="mRNA"/>
</dbReference>
<dbReference type="EMBL" id="BC099639">
    <property type="protein sequence ID" value="AAH99639.4"/>
    <property type="molecule type" value="mRNA"/>
</dbReference>
<dbReference type="CCDS" id="CCDS42748.1">
    <molecule id="O60243-1"/>
</dbReference>
<dbReference type="RefSeq" id="NP_004798.3">
    <molecule id="O60243-1"/>
    <property type="nucleotide sequence ID" value="NM_004807.2"/>
</dbReference>
<dbReference type="SMR" id="O60243"/>
<dbReference type="BioGRID" id="114793">
    <property type="interactions" value="41"/>
</dbReference>
<dbReference type="FunCoup" id="O60243">
    <property type="interactions" value="1311"/>
</dbReference>
<dbReference type="IntAct" id="O60243">
    <property type="interactions" value="33"/>
</dbReference>
<dbReference type="MINT" id="O60243"/>
<dbReference type="STRING" id="9606.ENSP00000259241"/>
<dbReference type="GlyCosmos" id="O60243">
    <property type="glycosylation" value="2 sites, No reported glycans"/>
</dbReference>
<dbReference type="GlyGen" id="O60243">
    <property type="glycosylation" value="3 sites, 1 N-linked glycan (1 site)"/>
</dbReference>
<dbReference type="iPTMnet" id="O60243"/>
<dbReference type="PhosphoSitePlus" id="O60243"/>
<dbReference type="BioMuta" id="HS6ST1"/>
<dbReference type="jPOST" id="O60243"/>
<dbReference type="MassIVE" id="O60243"/>
<dbReference type="PaxDb" id="9606-ENSP00000259241"/>
<dbReference type="PeptideAtlas" id="O60243"/>
<dbReference type="ProteomicsDB" id="49276">
    <molecule id="O60243-1"/>
</dbReference>
<dbReference type="ProteomicsDB" id="49277">
    <molecule id="O60243-2"/>
</dbReference>
<dbReference type="Antibodypedia" id="33479">
    <property type="antibodies" value="106 antibodies from 18 providers"/>
</dbReference>
<dbReference type="DNASU" id="9394"/>
<dbReference type="Ensembl" id="ENST00000259241.7">
    <molecule id="O60243-1"/>
    <property type="protein sequence ID" value="ENSP00000259241.6"/>
    <property type="gene ID" value="ENSG00000136720.7"/>
</dbReference>
<dbReference type="GeneID" id="9394"/>
<dbReference type="KEGG" id="hsa:9394"/>
<dbReference type="MANE-Select" id="ENST00000259241.7">
    <property type="protein sequence ID" value="ENSP00000259241.6"/>
    <property type="RefSeq nucleotide sequence ID" value="NM_004807.3"/>
    <property type="RefSeq protein sequence ID" value="NP_004798.3"/>
</dbReference>
<dbReference type="UCSC" id="uc002tpt.5">
    <molecule id="O60243-1"/>
    <property type="organism name" value="human"/>
</dbReference>
<dbReference type="AGR" id="HGNC:5201"/>
<dbReference type="CTD" id="9394"/>
<dbReference type="DisGeNET" id="9394"/>
<dbReference type="GeneCards" id="HS6ST1"/>
<dbReference type="GeneReviews" id="HS6ST1"/>
<dbReference type="HGNC" id="HGNC:5201">
    <property type="gene designation" value="HS6ST1"/>
</dbReference>
<dbReference type="HPA" id="ENSG00000136720">
    <property type="expression patterns" value="Low tissue specificity"/>
</dbReference>
<dbReference type="MalaCards" id="HS6ST1"/>
<dbReference type="MIM" id="604846">
    <property type="type" value="gene"/>
</dbReference>
<dbReference type="MIM" id="614880">
    <property type="type" value="phenotype"/>
</dbReference>
<dbReference type="neXtProt" id="NX_O60243"/>
<dbReference type="OpenTargets" id="ENSG00000136720"/>
<dbReference type="Orphanet" id="478">
    <property type="disease" value="Kallmann syndrome"/>
</dbReference>
<dbReference type="Orphanet" id="432">
    <property type="disease" value="Normosmic congenital hypogonadotropic hypogonadism"/>
</dbReference>
<dbReference type="PharmGKB" id="PA35102"/>
<dbReference type="VEuPathDB" id="HostDB:ENSG00000136720"/>
<dbReference type="eggNOG" id="KOG3955">
    <property type="taxonomic scope" value="Eukaryota"/>
</dbReference>
<dbReference type="GeneTree" id="ENSGT00950000183071"/>
<dbReference type="HOGENOM" id="CLU_027877_1_0_1"/>
<dbReference type="InParanoid" id="O60243"/>
<dbReference type="OMA" id="AYNELQP"/>
<dbReference type="OrthoDB" id="406981at2759"/>
<dbReference type="PAN-GO" id="O60243">
    <property type="GO annotations" value="2 GO annotations based on evolutionary models"/>
</dbReference>
<dbReference type="PhylomeDB" id="O60243"/>
<dbReference type="TreeFam" id="TF312835"/>
<dbReference type="BioCyc" id="MetaCyc:ENSG00000136720-MONOMER"/>
<dbReference type="PathwayCommons" id="O60243"/>
<dbReference type="Reactome" id="R-HSA-2022928">
    <property type="pathway name" value="HS-GAG biosynthesis"/>
</dbReference>
<dbReference type="SignaLink" id="O60243"/>
<dbReference type="BioGRID-ORCS" id="9394">
    <property type="hits" value="187 hits in 1125 CRISPR screens"/>
</dbReference>
<dbReference type="ChiTaRS" id="HS6ST1">
    <property type="organism name" value="human"/>
</dbReference>
<dbReference type="GenomeRNAi" id="9394"/>
<dbReference type="Pharos" id="O60243">
    <property type="development level" value="Tbio"/>
</dbReference>
<dbReference type="PRO" id="PR:O60243"/>
<dbReference type="Proteomes" id="UP000005640">
    <property type="component" value="Chromosome 2"/>
</dbReference>
<dbReference type="RNAct" id="O60243">
    <property type="molecule type" value="protein"/>
</dbReference>
<dbReference type="Bgee" id="ENSG00000136720">
    <property type="expression patterns" value="Expressed in kidney epithelium and 183 other cell types or tissues"/>
</dbReference>
<dbReference type="GO" id="GO:0000139">
    <property type="term" value="C:Golgi membrane"/>
    <property type="evidence" value="ECO:0000304"/>
    <property type="project" value="Reactome"/>
</dbReference>
<dbReference type="GO" id="GO:0005886">
    <property type="term" value="C:plasma membrane"/>
    <property type="evidence" value="ECO:0000304"/>
    <property type="project" value="ProtInc"/>
</dbReference>
<dbReference type="GO" id="GO:0017095">
    <property type="term" value="F:heparan sulfate 6-sulfotransferase activity"/>
    <property type="evidence" value="ECO:0000318"/>
    <property type="project" value="GO_Central"/>
</dbReference>
<dbReference type="GO" id="GO:0008146">
    <property type="term" value="F:sulfotransferase activity"/>
    <property type="evidence" value="ECO:0000304"/>
    <property type="project" value="ProtInc"/>
</dbReference>
<dbReference type="GO" id="GO:0001525">
    <property type="term" value="P:angiogenesis"/>
    <property type="evidence" value="ECO:0007669"/>
    <property type="project" value="Ensembl"/>
</dbReference>
<dbReference type="GO" id="GO:0015012">
    <property type="term" value="P:heparan sulfate proteoglycan biosynthetic process"/>
    <property type="evidence" value="ECO:0000304"/>
    <property type="project" value="ProtInc"/>
</dbReference>
<dbReference type="GO" id="GO:0060716">
    <property type="term" value="P:labyrinthine layer blood vessel development"/>
    <property type="evidence" value="ECO:0007669"/>
    <property type="project" value="Ensembl"/>
</dbReference>
<dbReference type="GO" id="GO:0048286">
    <property type="term" value="P:lung alveolus development"/>
    <property type="evidence" value="ECO:0007669"/>
    <property type="project" value="Ensembl"/>
</dbReference>
<dbReference type="GO" id="GO:0048666">
    <property type="term" value="P:neuron development"/>
    <property type="evidence" value="ECO:0000315"/>
    <property type="project" value="UniProtKB"/>
</dbReference>
<dbReference type="FunFam" id="3.40.50.300:FF:000347">
    <property type="entry name" value="Heparan-sulfate 6-O-sulfotransferase"/>
    <property type="match status" value="1"/>
</dbReference>
<dbReference type="Gene3D" id="3.40.50.300">
    <property type="entry name" value="P-loop containing nucleotide triphosphate hydrolases"/>
    <property type="match status" value="1"/>
</dbReference>
<dbReference type="InterPro" id="IPR010635">
    <property type="entry name" value="Heparan_SO4-6-sulfoTrfase"/>
</dbReference>
<dbReference type="InterPro" id="IPR027417">
    <property type="entry name" value="P-loop_NTPase"/>
</dbReference>
<dbReference type="InterPro" id="IPR005331">
    <property type="entry name" value="Sulfotransferase"/>
</dbReference>
<dbReference type="PANTHER" id="PTHR12812">
    <property type="entry name" value="HEPARAN SULFATE 6-O-SULFOTRANSFERASE 3"/>
    <property type="match status" value="1"/>
</dbReference>
<dbReference type="PANTHER" id="PTHR12812:SF1">
    <property type="entry name" value="HEPARAN-SULFATE 6-O-SULFOTRANSFERASE 1"/>
    <property type="match status" value="1"/>
</dbReference>
<dbReference type="Pfam" id="PF03567">
    <property type="entry name" value="Sulfotransfer_2"/>
    <property type="match status" value="1"/>
</dbReference>
<dbReference type="SUPFAM" id="SSF52540">
    <property type="entry name" value="P-loop containing nucleoside triphosphate hydrolases"/>
    <property type="match status" value="1"/>
</dbReference>
<evidence type="ECO:0000250" key="1"/>
<evidence type="ECO:0000250" key="2">
    <source>
        <dbReference type="UniProtKB" id="A0MGZ7"/>
    </source>
</evidence>
<evidence type="ECO:0000255" key="3"/>
<evidence type="ECO:0000269" key="4">
    <source>
    </source>
</evidence>
<evidence type="ECO:0000269" key="5">
    <source>
    </source>
</evidence>
<evidence type="ECO:0000269" key="6">
    <source>
    </source>
</evidence>
<evidence type="ECO:0000303" key="7">
    <source>
    </source>
</evidence>
<evidence type="ECO:0000305" key="8"/>
<evidence type="ECO:0000305" key="9">
    <source>
    </source>
</evidence>
<evidence type="ECO:0000312" key="10">
    <source>
        <dbReference type="HGNC" id="HGNC:5201"/>
    </source>
</evidence>
<keyword id="KW-0025">Alternative splicing</keyword>
<keyword id="KW-0175">Coiled coil</keyword>
<keyword id="KW-0225">Disease variant</keyword>
<keyword id="KW-0325">Glycoprotein</keyword>
<keyword id="KW-1016">Hypogonadotropic hypogonadism</keyword>
<keyword id="KW-0956">Kallmann syndrome</keyword>
<keyword id="KW-0472">Membrane</keyword>
<keyword id="KW-1267">Proteomics identification</keyword>
<keyword id="KW-1185">Reference proteome</keyword>
<keyword id="KW-0735">Signal-anchor</keyword>
<keyword id="KW-0808">Transferase</keyword>
<keyword id="KW-0812">Transmembrane</keyword>
<keyword id="KW-1133">Transmembrane helix</keyword>
<reference key="1">
    <citation type="journal article" date="1998" name="J. Biol. Chem.">
        <title>Molecular characterization and expression of heparan-sulfate 6-sulfotransferase.</title>
        <authorList>
            <person name="Habuchi H."/>
            <person name="Kobayashi M."/>
            <person name="Kimata K."/>
        </authorList>
    </citation>
    <scope>NUCLEOTIDE SEQUENCE [MRNA] (ISOFORM 1)</scope>
    <scope>FUNCTION</scope>
    <scope>CATALYTIC ACTIVITY</scope>
    <scope>TISSUE SPECIFICITY</scope>
    <source>
        <tissue>Fetal brain</tissue>
    </source>
</reference>
<reference key="2">
    <citation type="journal article" date="2004" name="Nat. Genet.">
        <title>Complete sequencing and characterization of 21,243 full-length human cDNAs.</title>
        <authorList>
            <person name="Ota T."/>
            <person name="Suzuki Y."/>
            <person name="Nishikawa T."/>
            <person name="Otsuki T."/>
            <person name="Sugiyama T."/>
            <person name="Irie R."/>
            <person name="Wakamatsu A."/>
            <person name="Hayashi K."/>
            <person name="Sato H."/>
            <person name="Nagai K."/>
            <person name="Kimura K."/>
            <person name="Makita H."/>
            <person name="Sekine M."/>
            <person name="Obayashi M."/>
            <person name="Nishi T."/>
            <person name="Shibahara T."/>
            <person name="Tanaka T."/>
            <person name="Ishii S."/>
            <person name="Yamamoto J."/>
            <person name="Saito K."/>
            <person name="Kawai Y."/>
            <person name="Isono Y."/>
            <person name="Nakamura Y."/>
            <person name="Nagahari K."/>
            <person name="Murakami K."/>
            <person name="Yasuda T."/>
            <person name="Iwayanagi T."/>
            <person name="Wagatsuma M."/>
            <person name="Shiratori A."/>
            <person name="Sudo H."/>
            <person name="Hosoiri T."/>
            <person name="Kaku Y."/>
            <person name="Kodaira H."/>
            <person name="Kondo H."/>
            <person name="Sugawara M."/>
            <person name="Takahashi M."/>
            <person name="Kanda K."/>
            <person name="Yokoi T."/>
            <person name="Furuya T."/>
            <person name="Kikkawa E."/>
            <person name="Omura Y."/>
            <person name="Abe K."/>
            <person name="Kamihara K."/>
            <person name="Katsuta N."/>
            <person name="Sato K."/>
            <person name="Tanikawa M."/>
            <person name="Yamazaki M."/>
            <person name="Ninomiya K."/>
            <person name="Ishibashi T."/>
            <person name="Yamashita H."/>
            <person name="Murakawa K."/>
            <person name="Fujimori K."/>
            <person name="Tanai H."/>
            <person name="Kimata M."/>
            <person name="Watanabe M."/>
            <person name="Hiraoka S."/>
            <person name="Chiba Y."/>
            <person name="Ishida S."/>
            <person name="Ono Y."/>
            <person name="Takiguchi S."/>
            <person name="Watanabe S."/>
            <person name="Yosida M."/>
            <person name="Hotuta T."/>
            <person name="Kusano J."/>
            <person name="Kanehori K."/>
            <person name="Takahashi-Fujii A."/>
            <person name="Hara H."/>
            <person name="Tanase T.-O."/>
            <person name="Nomura Y."/>
            <person name="Togiya S."/>
            <person name="Komai F."/>
            <person name="Hara R."/>
            <person name="Takeuchi K."/>
            <person name="Arita M."/>
            <person name="Imose N."/>
            <person name="Musashino K."/>
            <person name="Yuuki H."/>
            <person name="Oshima A."/>
            <person name="Sasaki N."/>
            <person name="Aotsuka S."/>
            <person name="Yoshikawa Y."/>
            <person name="Matsunawa H."/>
            <person name="Ichihara T."/>
            <person name="Shiohata N."/>
            <person name="Sano S."/>
            <person name="Moriya S."/>
            <person name="Momiyama H."/>
            <person name="Satoh N."/>
            <person name="Takami S."/>
            <person name="Terashima Y."/>
            <person name="Suzuki O."/>
            <person name="Nakagawa S."/>
            <person name="Senoh A."/>
            <person name="Mizoguchi H."/>
            <person name="Goto Y."/>
            <person name="Shimizu F."/>
            <person name="Wakebe H."/>
            <person name="Hishigaki H."/>
            <person name="Watanabe T."/>
            <person name="Sugiyama A."/>
            <person name="Takemoto M."/>
            <person name="Kawakami B."/>
            <person name="Yamazaki M."/>
            <person name="Watanabe K."/>
            <person name="Kumagai A."/>
            <person name="Itakura S."/>
            <person name="Fukuzumi Y."/>
            <person name="Fujimori Y."/>
            <person name="Komiyama M."/>
            <person name="Tashiro H."/>
            <person name="Tanigami A."/>
            <person name="Fujiwara T."/>
            <person name="Ono T."/>
            <person name="Yamada K."/>
            <person name="Fujii Y."/>
            <person name="Ozaki K."/>
            <person name="Hirao M."/>
            <person name="Ohmori Y."/>
            <person name="Kawabata A."/>
            <person name="Hikiji T."/>
            <person name="Kobatake N."/>
            <person name="Inagaki H."/>
            <person name="Ikema Y."/>
            <person name="Okamoto S."/>
            <person name="Okitani R."/>
            <person name="Kawakami T."/>
            <person name="Noguchi S."/>
            <person name="Itoh T."/>
            <person name="Shigeta K."/>
            <person name="Senba T."/>
            <person name="Matsumura K."/>
            <person name="Nakajima Y."/>
            <person name="Mizuno T."/>
            <person name="Morinaga M."/>
            <person name="Sasaki M."/>
            <person name="Togashi T."/>
            <person name="Oyama M."/>
            <person name="Hata H."/>
            <person name="Watanabe M."/>
            <person name="Komatsu T."/>
            <person name="Mizushima-Sugano J."/>
            <person name="Satoh T."/>
            <person name="Shirai Y."/>
            <person name="Takahashi Y."/>
            <person name="Nakagawa K."/>
            <person name="Okumura K."/>
            <person name="Nagase T."/>
            <person name="Nomura N."/>
            <person name="Kikuchi H."/>
            <person name="Masuho Y."/>
            <person name="Yamashita R."/>
            <person name="Nakai K."/>
            <person name="Yada T."/>
            <person name="Nakamura Y."/>
            <person name="Ohara O."/>
            <person name="Isogai T."/>
            <person name="Sugano S."/>
        </authorList>
    </citation>
    <scope>NUCLEOTIDE SEQUENCE [LARGE SCALE MRNA] (ISOFORM 2)</scope>
    <scope>NUCLEOTIDE SEQUENCE [LARGE SCALE MRNA] OF 171-411 (ISOFORM 1)</scope>
    <source>
        <tissue>Cerebellum</tissue>
        <tissue>Hippocampus</tissue>
    </source>
</reference>
<reference key="3">
    <citation type="journal article" date="2005" name="Nature">
        <title>Generation and annotation of the DNA sequences of human chromosomes 2 and 4.</title>
        <authorList>
            <person name="Hillier L.W."/>
            <person name="Graves T.A."/>
            <person name="Fulton R.S."/>
            <person name="Fulton L.A."/>
            <person name="Pepin K.H."/>
            <person name="Minx P."/>
            <person name="Wagner-McPherson C."/>
            <person name="Layman D."/>
            <person name="Wylie K."/>
            <person name="Sekhon M."/>
            <person name="Becker M.C."/>
            <person name="Fewell G.A."/>
            <person name="Delehaunty K.D."/>
            <person name="Miner T.L."/>
            <person name="Nash W.E."/>
            <person name="Kremitzki C."/>
            <person name="Oddy L."/>
            <person name="Du H."/>
            <person name="Sun H."/>
            <person name="Bradshaw-Cordum H."/>
            <person name="Ali J."/>
            <person name="Carter J."/>
            <person name="Cordes M."/>
            <person name="Harris A."/>
            <person name="Isak A."/>
            <person name="van Brunt A."/>
            <person name="Nguyen C."/>
            <person name="Du F."/>
            <person name="Courtney L."/>
            <person name="Kalicki J."/>
            <person name="Ozersky P."/>
            <person name="Abbott S."/>
            <person name="Armstrong J."/>
            <person name="Belter E.A."/>
            <person name="Caruso L."/>
            <person name="Cedroni M."/>
            <person name="Cotton M."/>
            <person name="Davidson T."/>
            <person name="Desai A."/>
            <person name="Elliott G."/>
            <person name="Erb T."/>
            <person name="Fronick C."/>
            <person name="Gaige T."/>
            <person name="Haakenson W."/>
            <person name="Haglund K."/>
            <person name="Holmes A."/>
            <person name="Harkins R."/>
            <person name="Kim K."/>
            <person name="Kruchowski S.S."/>
            <person name="Strong C.M."/>
            <person name="Grewal N."/>
            <person name="Goyea E."/>
            <person name="Hou S."/>
            <person name="Levy A."/>
            <person name="Martinka S."/>
            <person name="Mead K."/>
            <person name="McLellan M.D."/>
            <person name="Meyer R."/>
            <person name="Randall-Maher J."/>
            <person name="Tomlinson C."/>
            <person name="Dauphin-Kohlberg S."/>
            <person name="Kozlowicz-Reilly A."/>
            <person name="Shah N."/>
            <person name="Swearengen-Shahid S."/>
            <person name="Snider J."/>
            <person name="Strong J.T."/>
            <person name="Thompson J."/>
            <person name="Yoakum M."/>
            <person name="Leonard S."/>
            <person name="Pearman C."/>
            <person name="Trani L."/>
            <person name="Radionenko M."/>
            <person name="Waligorski J.E."/>
            <person name="Wang C."/>
            <person name="Rock S.M."/>
            <person name="Tin-Wollam A.-M."/>
            <person name="Maupin R."/>
            <person name="Latreille P."/>
            <person name="Wendl M.C."/>
            <person name="Yang S.-P."/>
            <person name="Pohl C."/>
            <person name="Wallis J.W."/>
            <person name="Spieth J."/>
            <person name="Bieri T.A."/>
            <person name="Berkowicz N."/>
            <person name="Nelson J.O."/>
            <person name="Osborne J."/>
            <person name="Ding L."/>
            <person name="Meyer R."/>
            <person name="Sabo A."/>
            <person name="Shotland Y."/>
            <person name="Sinha P."/>
            <person name="Wohldmann P.E."/>
            <person name="Cook L.L."/>
            <person name="Hickenbotham M.T."/>
            <person name="Eldred J."/>
            <person name="Williams D."/>
            <person name="Jones T.A."/>
            <person name="She X."/>
            <person name="Ciccarelli F.D."/>
            <person name="Izaurralde E."/>
            <person name="Taylor J."/>
            <person name="Schmutz J."/>
            <person name="Myers R.M."/>
            <person name="Cox D.R."/>
            <person name="Huang X."/>
            <person name="McPherson J.D."/>
            <person name="Mardis E.R."/>
            <person name="Clifton S.W."/>
            <person name="Warren W.C."/>
            <person name="Chinwalla A.T."/>
            <person name="Eddy S.R."/>
            <person name="Marra M.A."/>
            <person name="Ovcharenko I."/>
            <person name="Furey T.S."/>
            <person name="Miller W."/>
            <person name="Eichler E.E."/>
            <person name="Bork P."/>
            <person name="Suyama M."/>
            <person name="Torrents D."/>
            <person name="Waterston R.H."/>
            <person name="Wilson R.K."/>
        </authorList>
    </citation>
    <scope>NUCLEOTIDE SEQUENCE [LARGE SCALE GENOMIC DNA]</scope>
</reference>
<reference key="4">
    <citation type="journal article" date="2004" name="Genome Res.">
        <title>The status, quality, and expansion of the NIH full-length cDNA project: the Mammalian Gene Collection (MGC).</title>
        <authorList>
            <consortium name="The MGC Project Team"/>
        </authorList>
    </citation>
    <scope>NUCLEOTIDE SEQUENCE [LARGE SCALE MRNA] (ISOFORM 1)</scope>
    <source>
        <tissue>Eye</tissue>
    </source>
</reference>
<reference key="5">
    <citation type="journal article" date="2011" name="Proc. Natl. Acad. Sci. U.S.A.">
        <title>Heparan sulfate 6-O-sulfotransferase 1, a gene involved in extracellular sugar modifications, is mutated in patients with idiopathic hypogonadotrophic hypogonadism.</title>
        <authorList>
            <person name="Tornberg J."/>
            <person name="Sykiotis G.P."/>
            <person name="Keefe K."/>
            <person name="Plummer L."/>
            <person name="Hoang X."/>
            <person name="Hall J.E."/>
            <person name="Quinton R."/>
            <person name="Seminara S.B."/>
            <person name="Hughes V."/>
            <person name="Van Vliet G."/>
            <person name="Van Uum S."/>
            <person name="Crowley W.F."/>
            <person name="Habuchi H."/>
            <person name="Kimata K."/>
            <person name="Pitteloud N."/>
            <person name="Bulow H.E."/>
        </authorList>
    </citation>
    <scope>FUNCTION</scope>
    <scope>CATALYTIC ACTIVITY</scope>
    <scope>VARIANTS HH15 TRP-306; GLN-306; GLN-323; TRP-382 AND VAL-404</scope>
    <scope>CHARACTERIZATION OF VARIANTS HH15 TRP-306; GLN-306; GLN-323; TRP-382 AND VAL-404</scope>
</reference>
<reference key="6">
    <citation type="journal article" date="2014" name="J. Clin. Endocrinol. Metab.">
        <title>The prevalence of CHD7 missense versus truncating mutations is higher in patients with Kallmann syndrome than in typical CHARGE patients.</title>
        <authorList>
            <person name="Marcos S."/>
            <person name="Sarfati J."/>
            <person name="Leroy C."/>
            <person name="Fouveaut C."/>
            <person name="Parent P."/>
            <person name="Metz C."/>
            <person name="Wolczynski S."/>
            <person name="Gerard M."/>
            <person name="Bieth E."/>
            <person name="Kurtz F."/>
            <person name="Verier-Mine O."/>
            <person name="Perrin L."/>
            <person name="Archambeaud F."/>
            <person name="Cabrol S."/>
            <person name="Rodien P."/>
            <person name="Hove H."/>
            <person name="Prescott T."/>
            <person name="Lacombe D."/>
            <person name="Christin-Maitre S."/>
            <person name="Touraine P."/>
            <person name="Hieronimus S."/>
            <person name="Dewailly D."/>
            <person name="Young J."/>
            <person name="Pugeat M."/>
            <person name="Hardelin J.P."/>
            <person name="Dode C."/>
        </authorList>
    </citation>
    <scope>VARIANTS HH15 SER-218; GLN-306 AND TRP-306</scope>
</reference>
<comment type="function">
    <text evidence="4 6">6-O-sulfation enzyme which catalyzes the transfer of sulfate from 3'-phosphoadenosine 5'-phosphosulfate (PAPS) to position 6 of the N-sulfoglucosamine residue (GlcNS) of heparan sulfate. Critical for normal neuronal development where it may play a role in neuron branching. May also play a role in limb development. May prefer iduronic acid.</text>
</comment>
<comment type="catalytic activity">
    <reaction evidence="4 6">
        <text>alpha-D-glucosaminyl-[heparan sulfate](n) + 3'-phosphoadenylyl sulfate = 6-sulfo-alpha-D-glucosaminyl-[heparan sulfate](n) + adenosine 3',5'-bisphosphate + H(+)</text>
        <dbReference type="Rhea" id="RHEA:56604"/>
        <dbReference type="Rhea" id="RHEA-COMP:9830"/>
        <dbReference type="Rhea" id="RHEA-COMP:14621"/>
        <dbReference type="ChEBI" id="CHEBI:15378"/>
        <dbReference type="ChEBI" id="CHEBI:58339"/>
        <dbReference type="ChEBI" id="CHEBI:58343"/>
        <dbReference type="ChEBI" id="CHEBI:58388"/>
        <dbReference type="ChEBI" id="CHEBI:140604"/>
    </reaction>
    <physiologicalReaction direction="left-to-right" evidence="9">
        <dbReference type="Rhea" id="RHEA:56605"/>
    </physiologicalReaction>
</comment>
<comment type="interaction">
    <interactant intactId="EBI-12294537">
        <id>O60243</id>
    </interactant>
    <interactant intactId="EBI-948001">
        <id>Q15323</id>
        <label>KRT31</label>
    </interactant>
    <organismsDiffer>false</organismsDiffer>
    <experiments>3</experiments>
</comment>
<comment type="interaction">
    <interactant intactId="EBI-12294537">
        <id>O60243</id>
    </interactant>
    <interactant intactId="EBI-10171774">
        <id>P60410</id>
        <label>KRTAP10-8</label>
    </interactant>
    <organismsDiffer>false</organismsDiffer>
    <experiments>3</experiments>
</comment>
<comment type="subcellular location">
    <subcellularLocation>
        <location evidence="8">Membrane</location>
        <topology evidence="8">Single-pass type II membrane protein</topology>
    </subcellularLocation>
</comment>
<comment type="alternative products">
    <event type="alternative splicing"/>
    <isoform>
        <id>O60243-1</id>
        <name>1</name>
        <sequence type="displayed"/>
    </isoform>
    <isoform>
        <id>O60243-2</id>
        <name>2</name>
        <sequence type="described" ref="VSP_037048 VSP_037049"/>
    </isoform>
</comment>
<comment type="tissue specificity">
    <text evidence="6">Expressed in fetal brain.</text>
</comment>
<comment type="PTM">
    <text evidence="1">N-glycosylated.</text>
</comment>
<comment type="disease" evidence="4 5">
    <disease id="DI-03575">
        <name>Hypogonadotropic hypogonadism 15 with or without anosmia</name>
        <acronym>HH15</acronym>
        <description>A disorder characterized by absent or incomplete sexual maturation by the age of 18 years, in conjunction with low levels of circulating gonadotropins and testosterone and no other abnormalities of the hypothalamic-pituitary axis. In some cases, it is associated with non-reproductive phenotypes, such as anosmia, cleft palate, and sensorineural hearing loss. Anosmia or hyposmia is related to the absence or hypoplasia of the olfactory bulbs and tracts. Hypogonadism is due to deficiency in gonadotropin-releasing hormone and probably results from a failure of embryonic migration of gonadotropin-releasing hormone-synthesizing neurons. In the presence of anosmia, idiopathic hypogonadotropic hypogonadism is referred to as Kallmann syndrome, whereas in the presence of a normal sense of smell, it has been termed normosmic idiopathic hypogonadotropic hypogonadism (nIHH).</description>
        <dbReference type="MIM" id="614880"/>
    </disease>
    <text>The disease is caused by variants affecting distinct genetic loci, including the gene represented in this entry.</text>
</comment>
<comment type="similarity">
    <text evidence="8">Belongs to the sulfotransferase 6 family.</text>
</comment>
<comment type="sequence caution" evidence="8">
    <conflict type="erroneous initiation">
        <sequence resource="EMBL-CDS" id="AAY14736"/>
    </conflict>
    <text>Truncated N-terminus.</text>
</comment>
<comment type="sequence caution" evidence="8">
    <conflict type="erroneous initiation">
        <sequence resource="EMBL-CDS" id="BAA25760"/>
    </conflict>
    <text>Truncated N-terminus.</text>
</comment>
<comment type="sequence caution" evidence="8">
    <conflict type="frameshift">
        <sequence resource="EMBL-CDS" id="BAA25760"/>
    </conflict>
</comment>
<comment type="sequence caution" evidence="8">
    <conflict type="erroneous initiation">
        <sequence resource="EMBL-CDS" id="BAG57153"/>
    </conflict>
    <text>Truncated N-terminus.</text>
</comment>
<name>H6ST1_HUMAN</name>
<feature type="chain" id="PRO_0000190801" description="Heparan-sulfate 6-O-sulfotransferase 1">
    <location>
        <begin position="1"/>
        <end position="411"/>
    </location>
</feature>
<feature type="topological domain" description="Cytoplasmic" evidence="3">
    <location>
        <begin position="11"/>
        <end position="17"/>
    </location>
</feature>
<feature type="transmembrane region" description="Helical; Signal-anchor for type II membrane protein" evidence="3">
    <location>
        <begin position="18"/>
        <end position="37"/>
    </location>
</feature>
<feature type="topological domain" description="Lumenal" evidence="3">
    <location>
        <begin position="38"/>
        <end position="411"/>
    </location>
</feature>
<feature type="coiled-coil region" evidence="3">
    <location>
        <begin position="352"/>
        <end position="387"/>
    </location>
</feature>
<feature type="active site" description="Proton acceptor" evidence="2">
    <location>
        <position position="150"/>
    </location>
</feature>
<feature type="binding site" evidence="2">
    <location>
        <begin position="93"/>
        <end position="101"/>
    </location>
    <ligand>
        <name>3'-phosphoadenylyl sulfate</name>
        <dbReference type="ChEBI" id="CHEBI:58339"/>
    </ligand>
</feature>
<feature type="binding site" evidence="2">
    <location>
        <begin position="123"/>
        <end position="124"/>
    </location>
    <ligand>
        <name>substrate</name>
    </ligand>
</feature>
<feature type="binding site" evidence="2">
    <location>
        <position position="140"/>
    </location>
    <ligand>
        <name>substrate</name>
    </ligand>
</feature>
<feature type="binding site" evidence="2">
    <location>
        <position position="145"/>
    </location>
    <ligand>
        <name>substrate</name>
    </ligand>
</feature>
<feature type="binding site" evidence="2">
    <location>
        <position position="150"/>
    </location>
    <ligand>
        <name>substrate</name>
    </ligand>
</feature>
<feature type="binding site" evidence="2">
    <location>
        <position position="185"/>
    </location>
    <ligand>
        <name>3'-phosphoadenylyl sulfate</name>
        <dbReference type="ChEBI" id="CHEBI:58339"/>
    </ligand>
</feature>
<feature type="binding site" evidence="2">
    <location>
        <position position="193"/>
    </location>
    <ligand>
        <name>3'-phosphoadenylyl sulfate</name>
        <dbReference type="ChEBI" id="CHEBI:58339"/>
    </ligand>
</feature>
<feature type="binding site" evidence="2">
    <location>
        <position position="197"/>
    </location>
    <ligand>
        <name>substrate</name>
    </ligand>
</feature>
<feature type="binding site" evidence="2">
    <location>
        <position position="204"/>
    </location>
    <ligand>
        <name>substrate</name>
    </ligand>
</feature>
<feature type="binding site" evidence="2">
    <location>
        <begin position="317"/>
        <end position="319"/>
    </location>
    <ligand>
        <name>3'-phosphoadenylyl sulfate</name>
        <dbReference type="ChEBI" id="CHEBI:58339"/>
    </ligand>
</feature>
<feature type="binding site" evidence="2">
    <location>
        <begin position="323"/>
        <end position="324"/>
    </location>
    <ligand>
        <name>3'-phosphoadenylyl sulfate</name>
        <dbReference type="ChEBI" id="CHEBI:58339"/>
    </ligand>
</feature>
<feature type="glycosylation site" description="N-linked (GlcNAc...) asparagine" evidence="3">
    <location>
        <position position="264"/>
    </location>
</feature>
<feature type="glycosylation site" description="N-linked (GlcNAc...) asparagine" evidence="3">
    <location>
        <position position="320"/>
    </location>
</feature>
<feature type="splice variant" id="VSP_037048" description="In isoform 2." evidence="7">
    <location>
        <begin position="1"/>
        <end position="162"/>
    </location>
</feature>
<feature type="splice variant" id="VSP_037049" description="In isoform 2." evidence="7">
    <original>VLDRRDSAALRTP</original>
    <variation>MFSWCLWPVVGES</variation>
    <location>
        <begin position="163"/>
        <end position="175"/>
    </location>
</feature>
<feature type="sequence variant" id="VAR_072980" description="In HH15; dbSNP:rs200268730." evidence="5">
    <original>P</original>
    <variation>S</variation>
    <location>
        <position position="218"/>
    </location>
</feature>
<feature type="sequence variant" id="VAR_069283" description="In HH15; 15 to 30% reduction in enzymatic activity compared to wild-type; dbSNP:rs201307896." evidence="4 5">
    <original>R</original>
    <variation>Q</variation>
    <location>
        <position position="306"/>
    </location>
</feature>
<feature type="sequence variant" id="VAR_069284" description="In HH15; with anosmia; results in Kallmann syndrome in the presence of FGFR1 mutation Gln-250; approximately 50% reduction in enzymatic activity compared to wild-type; dbSNP:rs780352591." evidence="4 5">
    <original>R</original>
    <variation>W</variation>
    <location>
        <position position="306"/>
    </location>
</feature>
<feature type="sequence variant" id="VAR_069285" description="In HH15; approximately 30% reduction in enzymatic activity compared to wild-type when heparan sulfate is the acceptor substrate; dbSNP:rs761325768." evidence="4">
    <original>R</original>
    <variation>Q</variation>
    <location>
        <position position="323"/>
    </location>
</feature>
<feature type="sequence variant" id="VAR_069286" description="In HH15; with or without anosmia; results in Kallmann syndrome in the presence of NSMF mutation Ala-480; 25 to 35% reduction in enzymatic activity compared to wild-type; dbSNP:rs199538589." evidence="4">
    <original>R</original>
    <variation>W</variation>
    <location>
        <position position="382"/>
    </location>
</feature>
<feature type="sequence variant" id="VAR_069287" description="In HH15; with anosmia; 30 to 70% reduction in enzymatic activity compared to wild-type; dbSNP:rs2104908342." evidence="4">
    <original>M</original>
    <variation>V</variation>
    <location>
        <position position="404"/>
    </location>
</feature>
<feature type="sequence conflict" description="In Ref. 1; BAA25760." evidence="8" ref="1">
    <original>D</original>
    <variation>Y</variation>
    <location>
        <position position="55"/>
    </location>
</feature>
<feature type="sequence conflict" description="In Ref. 2; BAG57153." evidence="8" ref="2">
    <original>Y</original>
    <variation>C</variation>
    <location>
        <position position="191"/>
    </location>
</feature>
<feature type="sequence conflict" description="In Ref. 2; BAG57153." evidence="8" ref="2">
    <original>A</original>
    <variation>T</variation>
    <location>
        <position position="255"/>
    </location>
</feature>
<organism>
    <name type="scientific">Homo sapiens</name>
    <name type="common">Human</name>
    <dbReference type="NCBI Taxonomy" id="9606"/>
    <lineage>
        <taxon>Eukaryota</taxon>
        <taxon>Metazoa</taxon>
        <taxon>Chordata</taxon>
        <taxon>Craniata</taxon>
        <taxon>Vertebrata</taxon>
        <taxon>Euteleostomi</taxon>
        <taxon>Mammalia</taxon>
        <taxon>Eutheria</taxon>
        <taxon>Euarchontoglires</taxon>
        <taxon>Primates</taxon>
        <taxon>Haplorrhini</taxon>
        <taxon>Catarrhini</taxon>
        <taxon>Hominidae</taxon>
        <taxon>Homo</taxon>
    </lineage>
</organism>